<keyword id="KW-0963">Cytoplasm</keyword>
<keyword id="KW-0255">Endonuclease</keyword>
<keyword id="KW-0378">Hydrolase</keyword>
<keyword id="KW-0479">Metal-binding</keyword>
<keyword id="KW-0540">Nuclease</keyword>
<keyword id="KW-1185">Reference proteome</keyword>
<keyword id="KW-0690">Ribosome biogenesis</keyword>
<keyword id="KW-0698">rRNA processing</keyword>
<keyword id="KW-0862">Zinc</keyword>
<feature type="chain" id="PRO_0000102499" description="Endoribonuclease YbeY">
    <location>
        <begin position="1"/>
        <end position="154"/>
    </location>
</feature>
<feature type="binding site" evidence="1">
    <location>
        <position position="120"/>
    </location>
    <ligand>
        <name>Zn(2+)</name>
        <dbReference type="ChEBI" id="CHEBI:29105"/>
        <note>catalytic</note>
    </ligand>
</feature>
<feature type="binding site" evidence="1">
    <location>
        <position position="124"/>
    </location>
    <ligand>
        <name>Zn(2+)</name>
        <dbReference type="ChEBI" id="CHEBI:29105"/>
        <note>catalytic</note>
    </ligand>
</feature>
<feature type="binding site" evidence="1">
    <location>
        <position position="130"/>
    </location>
    <ligand>
        <name>Zn(2+)</name>
        <dbReference type="ChEBI" id="CHEBI:29105"/>
        <note>catalytic</note>
    </ligand>
</feature>
<sequence>MHIDFHDETNSVSEDYIDLIQRLLDFAAQKEGVTSEAELSVNFVDNKEIQVLNRNYRQKDTPTDVISFAMQESNEDEMEIIGADGPLVLGDIVISVDKAKEQSIEYDHSLERELGFLAVHGFLHLLGYDHMKEEDEKKMFSRQEEILGEFGVER</sequence>
<organism>
    <name type="scientific">Oceanobacillus iheyensis (strain DSM 14371 / CIP 107618 / JCM 11309 / KCTC 3954 / HTE831)</name>
    <dbReference type="NCBI Taxonomy" id="221109"/>
    <lineage>
        <taxon>Bacteria</taxon>
        <taxon>Bacillati</taxon>
        <taxon>Bacillota</taxon>
        <taxon>Bacilli</taxon>
        <taxon>Bacillales</taxon>
        <taxon>Bacillaceae</taxon>
        <taxon>Oceanobacillus</taxon>
    </lineage>
</organism>
<evidence type="ECO:0000255" key="1">
    <source>
        <dbReference type="HAMAP-Rule" id="MF_00009"/>
    </source>
</evidence>
<name>YBEY_OCEIH</name>
<comment type="function">
    <text evidence="1">Single strand-specific metallo-endoribonuclease involved in late-stage 70S ribosome quality control and in maturation of the 3' terminus of the 16S rRNA.</text>
</comment>
<comment type="cofactor">
    <cofactor evidence="1">
        <name>Zn(2+)</name>
        <dbReference type="ChEBI" id="CHEBI:29105"/>
    </cofactor>
    <text evidence="1">Binds 1 zinc ion.</text>
</comment>
<comment type="subcellular location">
    <subcellularLocation>
        <location evidence="1">Cytoplasm</location>
    </subcellularLocation>
</comment>
<comment type="similarity">
    <text evidence="1">Belongs to the endoribonuclease YbeY family.</text>
</comment>
<dbReference type="EC" id="3.1.-.-" evidence="1"/>
<dbReference type="EMBL" id="BA000028">
    <property type="protein sequence ID" value="BAC13909.1"/>
    <property type="molecule type" value="Genomic_DNA"/>
</dbReference>
<dbReference type="RefSeq" id="WP_011066350.1">
    <property type="nucleotide sequence ID" value="NC_004193.1"/>
</dbReference>
<dbReference type="SMR" id="Q8EPX8"/>
<dbReference type="STRING" id="221109.gene:10734199"/>
<dbReference type="KEGG" id="oih:OB1953"/>
<dbReference type="eggNOG" id="COG0319">
    <property type="taxonomic scope" value="Bacteria"/>
</dbReference>
<dbReference type="HOGENOM" id="CLU_106710_3_0_9"/>
<dbReference type="OrthoDB" id="9807740at2"/>
<dbReference type="PhylomeDB" id="Q8EPX8"/>
<dbReference type="Proteomes" id="UP000000822">
    <property type="component" value="Chromosome"/>
</dbReference>
<dbReference type="GO" id="GO:0005737">
    <property type="term" value="C:cytoplasm"/>
    <property type="evidence" value="ECO:0007669"/>
    <property type="project" value="UniProtKB-SubCell"/>
</dbReference>
<dbReference type="GO" id="GO:0004222">
    <property type="term" value="F:metalloendopeptidase activity"/>
    <property type="evidence" value="ECO:0007669"/>
    <property type="project" value="InterPro"/>
</dbReference>
<dbReference type="GO" id="GO:0004521">
    <property type="term" value="F:RNA endonuclease activity"/>
    <property type="evidence" value="ECO:0007669"/>
    <property type="project" value="UniProtKB-UniRule"/>
</dbReference>
<dbReference type="GO" id="GO:0008270">
    <property type="term" value="F:zinc ion binding"/>
    <property type="evidence" value="ECO:0007669"/>
    <property type="project" value="UniProtKB-UniRule"/>
</dbReference>
<dbReference type="GO" id="GO:0006364">
    <property type="term" value="P:rRNA processing"/>
    <property type="evidence" value="ECO:0007669"/>
    <property type="project" value="UniProtKB-UniRule"/>
</dbReference>
<dbReference type="Gene3D" id="3.40.390.30">
    <property type="entry name" value="Metalloproteases ('zincins'), catalytic domain"/>
    <property type="match status" value="1"/>
</dbReference>
<dbReference type="HAMAP" id="MF_00009">
    <property type="entry name" value="Endoribonucl_YbeY"/>
    <property type="match status" value="1"/>
</dbReference>
<dbReference type="InterPro" id="IPR023091">
    <property type="entry name" value="MetalPrtase_cat_dom_sf_prd"/>
</dbReference>
<dbReference type="InterPro" id="IPR002036">
    <property type="entry name" value="YbeY"/>
</dbReference>
<dbReference type="InterPro" id="IPR020549">
    <property type="entry name" value="YbeY_CS"/>
</dbReference>
<dbReference type="NCBIfam" id="TIGR00043">
    <property type="entry name" value="rRNA maturation RNase YbeY"/>
    <property type="match status" value="1"/>
</dbReference>
<dbReference type="PANTHER" id="PTHR46986">
    <property type="entry name" value="ENDORIBONUCLEASE YBEY, CHLOROPLASTIC"/>
    <property type="match status" value="1"/>
</dbReference>
<dbReference type="PANTHER" id="PTHR46986:SF1">
    <property type="entry name" value="ENDORIBONUCLEASE YBEY, CHLOROPLASTIC"/>
    <property type="match status" value="1"/>
</dbReference>
<dbReference type="Pfam" id="PF02130">
    <property type="entry name" value="YbeY"/>
    <property type="match status" value="1"/>
</dbReference>
<dbReference type="SUPFAM" id="SSF55486">
    <property type="entry name" value="Metalloproteases ('zincins'), catalytic domain"/>
    <property type="match status" value="1"/>
</dbReference>
<dbReference type="PROSITE" id="PS01306">
    <property type="entry name" value="UPF0054"/>
    <property type="match status" value="1"/>
</dbReference>
<accession>Q8EPX8</accession>
<proteinExistence type="inferred from homology"/>
<protein>
    <recommendedName>
        <fullName evidence="1">Endoribonuclease YbeY</fullName>
        <ecNumber evidence="1">3.1.-.-</ecNumber>
    </recommendedName>
</protein>
<gene>
    <name evidence="1" type="primary">ybeY</name>
    <name type="ordered locus">OB1953</name>
</gene>
<reference key="1">
    <citation type="journal article" date="2002" name="Nucleic Acids Res.">
        <title>Genome sequence of Oceanobacillus iheyensis isolated from the Iheya Ridge and its unexpected adaptive capabilities to extreme environments.</title>
        <authorList>
            <person name="Takami H."/>
            <person name="Takaki Y."/>
            <person name="Uchiyama I."/>
        </authorList>
    </citation>
    <scope>NUCLEOTIDE SEQUENCE [LARGE SCALE GENOMIC DNA]</scope>
    <source>
        <strain>DSM 14371 / CIP 107618 / JCM 11309 / KCTC 3954 / HTE831</strain>
    </source>
</reference>